<organism>
    <name type="scientific">Allorhizobium ampelinum (strain ATCC BAA-846 / DSM 112012 / S4)</name>
    <name type="common">Agrobacterium vitis (strain S4)</name>
    <dbReference type="NCBI Taxonomy" id="311402"/>
    <lineage>
        <taxon>Bacteria</taxon>
        <taxon>Pseudomonadati</taxon>
        <taxon>Pseudomonadota</taxon>
        <taxon>Alphaproteobacteria</taxon>
        <taxon>Hyphomicrobiales</taxon>
        <taxon>Rhizobiaceae</taxon>
        <taxon>Rhizobium/Agrobacterium group</taxon>
        <taxon>Allorhizobium</taxon>
        <taxon>Allorhizobium ampelinum</taxon>
    </lineage>
</organism>
<comment type="function">
    <text evidence="1">Catalyzes the oxidation of either pyridoxine 5'-phosphate (PNP) or pyridoxamine 5'-phosphate (PMP) into pyridoxal 5'-phosphate (PLP).</text>
</comment>
<comment type="catalytic activity">
    <reaction evidence="1">
        <text>pyridoxamine 5'-phosphate + O2 + H2O = pyridoxal 5'-phosphate + H2O2 + NH4(+)</text>
        <dbReference type="Rhea" id="RHEA:15817"/>
        <dbReference type="ChEBI" id="CHEBI:15377"/>
        <dbReference type="ChEBI" id="CHEBI:15379"/>
        <dbReference type="ChEBI" id="CHEBI:16240"/>
        <dbReference type="ChEBI" id="CHEBI:28938"/>
        <dbReference type="ChEBI" id="CHEBI:58451"/>
        <dbReference type="ChEBI" id="CHEBI:597326"/>
        <dbReference type="EC" id="1.4.3.5"/>
    </reaction>
</comment>
<comment type="catalytic activity">
    <reaction evidence="1">
        <text>pyridoxine 5'-phosphate + O2 = pyridoxal 5'-phosphate + H2O2</text>
        <dbReference type="Rhea" id="RHEA:15149"/>
        <dbReference type="ChEBI" id="CHEBI:15379"/>
        <dbReference type="ChEBI" id="CHEBI:16240"/>
        <dbReference type="ChEBI" id="CHEBI:58589"/>
        <dbReference type="ChEBI" id="CHEBI:597326"/>
        <dbReference type="EC" id="1.4.3.5"/>
    </reaction>
</comment>
<comment type="cofactor">
    <cofactor evidence="1">
        <name>FMN</name>
        <dbReference type="ChEBI" id="CHEBI:58210"/>
    </cofactor>
    <text evidence="1">Binds 1 FMN per subunit.</text>
</comment>
<comment type="pathway">
    <text evidence="1">Cofactor metabolism; pyridoxal 5'-phosphate salvage; pyridoxal 5'-phosphate from pyridoxamine 5'-phosphate: step 1/1.</text>
</comment>
<comment type="pathway">
    <text evidence="1">Cofactor metabolism; pyridoxal 5'-phosphate salvage; pyridoxal 5'-phosphate from pyridoxine 5'-phosphate: step 1/1.</text>
</comment>
<comment type="subunit">
    <text evidence="1">Homodimer.</text>
</comment>
<comment type="similarity">
    <text evidence="1">Belongs to the pyridoxamine 5'-phosphate oxidase family.</text>
</comment>
<gene>
    <name evidence="1" type="primary">pdxH</name>
    <name type="ordered locus">Avi_1026</name>
</gene>
<protein>
    <recommendedName>
        <fullName evidence="1">Pyridoxine/pyridoxamine 5'-phosphate oxidase</fullName>
        <ecNumber evidence="1">1.4.3.5</ecNumber>
    </recommendedName>
    <alternativeName>
        <fullName evidence="1">PNP/PMP oxidase</fullName>
        <shortName evidence="1">PNPOx</shortName>
    </alternativeName>
    <alternativeName>
        <fullName evidence="1">Pyridoxal 5'-phosphate synthase</fullName>
    </alternativeName>
</protein>
<proteinExistence type="inferred from homology"/>
<reference key="1">
    <citation type="journal article" date="2009" name="J. Bacteriol.">
        <title>Genome sequences of three Agrobacterium biovars help elucidate the evolution of multichromosome genomes in bacteria.</title>
        <authorList>
            <person name="Slater S.C."/>
            <person name="Goldman B.S."/>
            <person name="Goodner B."/>
            <person name="Setubal J.C."/>
            <person name="Farrand S.K."/>
            <person name="Nester E.W."/>
            <person name="Burr T.J."/>
            <person name="Banta L."/>
            <person name="Dickerman A.W."/>
            <person name="Paulsen I."/>
            <person name="Otten L."/>
            <person name="Suen G."/>
            <person name="Welch R."/>
            <person name="Almeida N.F."/>
            <person name="Arnold F."/>
            <person name="Burton O.T."/>
            <person name="Du Z."/>
            <person name="Ewing A."/>
            <person name="Godsy E."/>
            <person name="Heisel S."/>
            <person name="Houmiel K.L."/>
            <person name="Jhaveri J."/>
            <person name="Lu J."/>
            <person name="Miller N.M."/>
            <person name="Norton S."/>
            <person name="Chen Q."/>
            <person name="Phoolcharoen W."/>
            <person name="Ohlin V."/>
            <person name="Ondrusek D."/>
            <person name="Pride N."/>
            <person name="Stricklin S.L."/>
            <person name="Sun J."/>
            <person name="Wheeler C."/>
            <person name="Wilson L."/>
            <person name="Zhu H."/>
            <person name="Wood D.W."/>
        </authorList>
    </citation>
    <scope>NUCLEOTIDE SEQUENCE [LARGE SCALE GENOMIC DNA]</scope>
    <source>
        <strain>ATCC BAA-846 / DSM 112012 / S4</strain>
    </source>
</reference>
<keyword id="KW-0285">Flavoprotein</keyword>
<keyword id="KW-0288">FMN</keyword>
<keyword id="KW-0560">Oxidoreductase</keyword>
<keyword id="KW-0664">Pyridoxine biosynthesis</keyword>
<keyword id="KW-1185">Reference proteome</keyword>
<sequence>MSQNELTTGDFTDEHEPFGLFETWLTEAKASEINDPNAVALATVDESGLPNVRMVLLKDFDQNGFVFYTNFESQKGTEILSQKKAAMCFHWKSLRRQVRLRGEVEVVSDAEADAYYQTRPIGSRIGAWASKQSRPLESRFALEKAVAEYTARYALGSIPRPAHWSGFRIKPLTIEFWRDGKFRLHDRIEFRREALGQPWNKVRMYP</sequence>
<evidence type="ECO:0000255" key="1">
    <source>
        <dbReference type="HAMAP-Rule" id="MF_01629"/>
    </source>
</evidence>
<name>PDXH_ALLAM</name>
<dbReference type="EC" id="1.4.3.5" evidence="1"/>
<dbReference type="EMBL" id="CP000633">
    <property type="protein sequence ID" value="ACM35726.1"/>
    <property type="molecule type" value="Genomic_DNA"/>
</dbReference>
<dbReference type="RefSeq" id="WP_015915150.1">
    <property type="nucleotide sequence ID" value="NC_011989.1"/>
</dbReference>
<dbReference type="SMR" id="B9JSN3"/>
<dbReference type="STRING" id="311402.Avi_1026"/>
<dbReference type="KEGG" id="avi:Avi_1026"/>
<dbReference type="eggNOG" id="COG0259">
    <property type="taxonomic scope" value="Bacteria"/>
</dbReference>
<dbReference type="HOGENOM" id="CLU_032263_2_3_5"/>
<dbReference type="UniPathway" id="UPA01068">
    <property type="reaction ID" value="UER00304"/>
</dbReference>
<dbReference type="UniPathway" id="UPA01068">
    <property type="reaction ID" value="UER00305"/>
</dbReference>
<dbReference type="Proteomes" id="UP000001596">
    <property type="component" value="Chromosome 1"/>
</dbReference>
<dbReference type="GO" id="GO:0010181">
    <property type="term" value="F:FMN binding"/>
    <property type="evidence" value="ECO:0007669"/>
    <property type="project" value="UniProtKB-UniRule"/>
</dbReference>
<dbReference type="GO" id="GO:0004733">
    <property type="term" value="F:pyridoxamine phosphate oxidase activity"/>
    <property type="evidence" value="ECO:0007669"/>
    <property type="project" value="UniProtKB-UniRule"/>
</dbReference>
<dbReference type="GO" id="GO:0008615">
    <property type="term" value="P:pyridoxine biosynthetic process"/>
    <property type="evidence" value="ECO:0007669"/>
    <property type="project" value="UniProtKB-KW"/>
</dbReference>
<dbReference type="Gene3D" id="2.30.110.10">
    <property type="entry name" value="Electron Transport, Fmn-binding Protein, Chain A"/>
    <property type="match status" value="1"/>
</dbReference>
<dbReference type="HAMAP" id="MF_01629">
    <property type="entry name" value="PdxH"/>
    <property type="match status" value="1"/>
</dbReference>
<dbReference type="InterPro" id="IPR000659">
    <property type="entry name" value="Pyridox_Oxase"/>
</dbReference>
<dbReference type="InterPro" id="IPR019740">
    <property type="entry name" value="Pyridox_Oxase_CS"/>
</dbReference>
<dbReference type="InterPro" id="IPR011576">
    <property type="entry name" value="Pyridox_Oxase_N"/>
</dbReference>
<dbReference type="InterPro" id="IPR019576">
    <property type="entry name" value="Pyridoxamine_oxidase_dimer_C"/>
</dbReference>
<dbReference type="InterPro" id="IPR012349">
    <property type="entry name" value="Split_barrel_FMN-bd"/>
</dbReference>
<dbReference type="NCBIfam" id="TIGR00558">
    <property type="entry name" value="pdxH"/>
    <property type="match status" value="1"/>
</dbReference>
<dbReference type="NCBIfam" id="NF004231">
    <property type="entry name" value="PRK05679.1"/>
    <property type="match status" value="1"/>
</dbReference>
<dbReference type="PANTHER" id="PTHR10851:SF0">
    <property type="entry name" value="PYRIDOXINE-5'-PHOSPHATE OXIDASE"/>
    <property type="match status" value="1"/>
</dbReference>
<dbReference type="PANTHER" id="PTHR10851">
    <property type="entry name" value="PYRIDOXINE-5-PHOSPHATE OXIDASE"/>
    <property type="match status" value="1"/>
</dbReference>
<dbReference type="Pfam" id="PF10590">
    <property type="entry name" value="PNP_phzG_C"/>
    <property type="match status" value="1"/>
</dbReference>
<dbReference type="Pfam" id="PF01243">
    <property type="entry name" value="PNPOx_N"/>
    <property type="match status" value="1"/>
</dbReference>
<dbReference type="PIRSF" id="PIRSF000190">
    <property type="entry name" value="Pyd_amn-ph_oxd"/>
    <property type="match status" value="1"/>
</dbReference>
<dbReference type="SUPFAM" id="SSF50475">
    <property type="entry name" value="FMN-binding split barrel"/>
    <property type="match status" value="1"/>
</dbReference>
<dbReference type="PROSITE" id="PS01064">
    <property type="entry name" value="PYRIDOX_OXIDASE"/>
    <property type="match status" value="1"/>
</dbReference>
<accession>B9JSN3</accession>
<feature type="chain" id="PRO_1000186286" description="Pyridoxine/pyridoxamine 5'-phosphate oxidase">
    <location>
        <begin position="1"/>
        <end position="206"/>
    </location>
</feature>
<feature type="binding site" evidence="1">
    <location>
        <begin position="53"/>
        <end position="58"/>
    </location>
    <ligand>
        <name>FMN</name>
        <dbReference type="ChEBI" id="CHEBI:58210"/>
    </ligand>
</feature>
<feature type="binding site" evidence="1">
    <location>
        <position position="58"/>
    </location>
    <ligand>
        <name>substrate</name>
    </ligand>
</feature>
<feature type="binding site" evidence="1">
    <location>
        <begin position="68"/>
        <end position="69"/>
    </location>
    <ligand>
        <name>FMN</name>
        <dbReference type="ChEBI" id="CHEBI:58210"/>
    </ligand>
</feature>
<feature type="binding site" evidence="1">
    <location>
        <position position="75"/>
    </location>
    <ligand>
        <name>FMN</name>
        <dbReference type="ChEBI" id="CHEBI:58210"/>
    </ligand>
</feature>
<feature type="binding site" evidence="1">
    <location>
        <position position="97"/>
    </location>
    <ligand>
        <name>FMN</name>
        <dbReference type="ChEBI" id="CHEBI:58210"/>
    </ligand>
</feature>
<feature type="binding site" evidence="1">
    <location>
        <position position="115"/>
    </location>
    <ligand>
        <name>substrate</name>
    </ligand>
</feature>
<feature type="binding site" evidence="1">
    <location>
        <position position="119"/>
    </location>
    <ligand>
        <name>substrate</name>
    </ligand>
</feature>
<feature type="binding site" evidence="1">
    <location>
        <position position="123"/>
    </location>
    <ligand>
        <name>substrate</name>
    </ligand>
</feature>
<feature type="binding site" evidence="1">
    <location>
        <begin position="132"/>
        <end position="133"/>
    </location>
    <ligand>
        <name>FMN</name>
        <dbReference type="ChEBI" id="CHEBI:58210"/>
    </ligand>
</feature>
<feature type="binding site" evidence="1">
    <location>
        <position position="177"/>
    </location>
    <ligand>
        <name>FMN</name>
        <dbReference type="ChEBI" id="CHEBI:58210"/>
    </ligand>
</feature>
<feature type="binding site" evidence="1">
    <location>
        <begin position="183"/>
        <end position="185"/>
    </location>
    <ligand>
        <name>substrate</name>
    </ligand>
</feature>
<feature type="binding site" evidence="1">
    <location>
        <position position="187"/>
    </location>
    <ligand>
        <name>FMN</name>
        <dbReference type="ChEBI" id="CHEBI:58210"/>
    </ligand>
</feature>